<reference key="1">
    <citation type="submission" date="2006-05" db="EMBL/GenBank/DDBJ databases">
        <title>Complete sequence of chromosome of Silicibacter sp. TM1040.</title>
        <authorList>
            <consortium name="US DOE Joint Genome Institute"/>
            <person name="Copeland A."/>
            <person name="Lucas S."/>
            <person name="Lapidus A."/>
            <person name="Barry K."/>
            <person name="Detter J.C."/>
            <person name="Glavina del Rio T."/>
            <person name="Hammon N."/>
            <person name="Israni S."/>
            <person name="Dalin E."/>
            <person name="Tice H."/>
            <person name="Pitluck S."/>
            <person name="Brettin T."/>
            <person name="Bruce D."/>
            <person name="Han C."/>
            <person name="Tapia R."/>
            <person name="Goodwin L."/>
            <person name="Thompson L.S."/>
            <person name="Gilna P."/>
            <person name="Schmutz J."/>
            <person name="Larimer F."/>
            <person name="Land M."/>
            <person name="Hauser L."/>
            <person name="Kyrpides N."/>
            <person name="Kim E."/>
            <person name="Belas R."/>
            <person name="Moran M.A."/>
            <person name="Buchan A."/>
            <person name="Gonzalez J.M."/>
            <person name="Schell M.A."/>
            <person name="Sun F."/>
            <person name="Richardson P."/>
        </authorList>
    </citation>
    <scope>NUCLEOTIDE SEQUENCE [LARGE SCALE GENOMIC DNA]</scope>
    <source>
        <strain>TM1040</strain>
    </source>
</reference>
<sequence length="123" mass="13703">MDLIAQLEAEQIAALGKEIPDFKAGDTIRVGYKVTEGTRTRVQAYEGVCISRKNGSGIAGSFTVRKISFGEGVERVFPLYSTNIESIEVVRRGRVRRAKLYYLRSRRGKSARIAEDANYKAKA</sequence>
<name>RL19_RUEST</name>
<accession>Q1GDB8</accession>
<comment type="function">
    <text evidence="1">This protein is located at the 30S-50S ribosomal subunit interface and may play a role in the structure and function of the aminoacyl-tRNA binding site.</text>
</comment>
<comment type="similarity">
    <text evidence="1">Belongs to the bacterial ribosomal protein bL19 family.</text>
</comment>
<gene>
    <name evidence="1" type="primary">rplS</name>
    <name type="ordered locus">TM1040_2616</name>
</gene>
<proteinExistence type="inferred from homology"/>
<feature type="chain" id="PRO_0000252543" description="Large ribosomal subunit protein bL19">
    <location>
        <begin position="1"/>
        <end position="123"/>
    </location>
</feature>
<protein>
    <recommendedName>
        <fullName evidence="1">Large ribosomal subunit protein bL19</fullName>
    </recommendedName>
    <alternativeName>
        <fullName evidence="2">50S ribosomal protein L19</fullName>
    </alternativeName>
</protein>
<keyword id="KW-1185">Reference proteome</keyword>
<keyword id="KW-0687">Ribonucleoprotein</keyword>
<keyword id="KW-0689">Ribosomal protein</keyword>
<dbReference type="EMBL" id="CP000377">
    <property type="protein sequence ID" value="ABF65348.1"/>
    <property type="molecule type" value="Genomic_DNA"/>
</dbReference>
<dbReference type="RefSeq" id="WP_011539930.1">
    <property type="nucleotide sequence ID" value="NC_008044.1"/>
</dbReference>
<dbReference type="SMR" id="Q1GDB8"/>
<dbReference type="STRING" id="292414.TM1040_2616"/>
<dbReference type="KEGG" id="sit:TM1040_2616"/>
<dbReference type="eggNOG" id="COG0335">
    <property type="taxonomic scope" value="Bacteria"/>
</dbReference>
<dbReference type="HOGENOM" id="CLU_103507_0_2_5"/>
<dbReference type="OrthoDB" id="9803541at2"/>
<dbReference type="Proteomes" id="UP000000636">
    <property type="component" value="Chromosome"/>
</dbReference>
<dbReference type="GO" id="GO:0022625">
    <property type="term" value="C:cytosolic large ribosomal subunit"/>
    <property type="evidence" value="ECO:0007669"/>
    <property type="project" value="TreeGrafter"/>
</dbReference>
<dbReference type="GO" id="GO:0003735">
    <property type="term" value="F:structural constituent of ribosome"/>
    <property type="evidence" value="ECO:0007669"/>
    <property type="project" value="InterPro"/>
</dbReference>
<dbReference type="GO" id="GO:0006412">
    <property type="term" value="P:translation"/>
    <property type="evidence" value="ECO:0007669"/>
    <property type="project" value="UniProtKB-UniRule"/>
</dbReference>
<dbReference type="FunFam" id="2.30.30.790:FF:000001">
    <property type="entry name" value="50S ribosomal protein L19"/>
    <property type="match status" value="1"/>
</dbReference>
<dbReference type="Gene3D" id="2.30.30.790">
    <property type="match status" value="1"/>
</dbReference>
<dbReference type="HAMAP" id="MF_00402">
    <property type="entry name" value="Ribosomal_bL19"/>
    <property type="match status" value="1"/>
</dbReference>
<dbReference type="InterPro" id="IPR001857">
    <property type="entry name" value="Ribosomal_bL19"/>
</dbReference>
<dbReference type="InterPro" id="IPR018257">
    <property type="entry name" value="Ribosomal_bL19_CS"/>
</dbReference>
<dbReference type="InterPro" id="IPR038657">
    <property type="entry name" value="Ribosomal_bL19_sf"/>
</dbReference>
<dbReference type="InterPro" id="IPR008991">
    <property type="entry name" value="Translation_prot_SH3-like_sf"/>
</dbReference>
<dbReference type="NCBIfam" id="TIGR01024">
    <property type="entry name" value="rplS_bact"/>
    <property type="match status" value="1"/>
</dbReference>
<dbReference type="PANTHER" id="PTHR15680:SF9">
    <property type="entry name" value="LARGE RIBOSOMAL SUBUNIT PROTEIN BL19M"/>
    <property type="match status" value="1"/>
</dbReference>
<dbReference type="PANTHER" id="PTHR15680">
    <property type="entry name" value="RIBOSOMAL PROTEIN L19"/>
    <property type="match status" value="1"/>
</dbReference>
<dbReference type="Pfam" id="PF01245">
    <property type="entry name" value="Ribosomal_L19"/>
    <property type="match status" value="1"/>
</dbReference>
<dbReference type="PIRSF" id="PIRSF002191">
    <property type="entry name" value="Ribosomal_L19"/>
    <property type="match status" value="1"/>
</dbReference>
<dbReference type="PRINTS" id="PR00061">
    <property type="entry name" value="RIBOSOMALL19"/>
</dbReference>
<dbReference type="SUPFAM" id="SSF50104">
    <property type="entry name" value="Translation proteins SH3-like domain"/>
    <property type="match status" value="1"/>
</dbReference>
<dbReference type="PROSITE" id="PS01015">
    <property type="entry name" value="RIBOSOMAL_L19"/>
    <property type="match status" value="1"/>
</dbReference>
<evidence type="ECO:0000255" key="1">
    <source>
        <dbReference type="HAMAP-Rule" id="MF_00402"/>
    </source>
</evidence>
<evidence type="ECO:0000305" key="2"/>
<organism>
    <name type="scientific">Ruegeria sp. (strain TM1040)</name>
    <name type="common">Silicibacter sp.</name>
    <dbReference type="NCBI Taxonomy" id="292414"/>
    <lineage>
        <taxon>Bacteria</taxon>
        <taxon>Pseudomonadati</taxon>
        <taxon>Pseudomonadota</taxon>
        <taxon>Alphaproteobacteria</taxon>
        <taxon>Rhodobacterales</taxon>
        <taxon>Roseobacteraceae</taxon>
        <taxon>Ruegeria</taxon>
    </lineage>
</organism>